<sequence>MPFDSEIVEVKTRPGEEVATLAGGCFWCTEAVFERMEGVNDVVSGYIGGKIKNPNYKQVCGKMTGHAEAVQIYYDPSKTNFEELLKVFFKTHDPTTLNRQGADGGPQYRSSIFVHNDEQREIAKKTMEKLGEEYRDPIVTLIEPATKFYVAEEYHQDYYRRNPNAGYCQAVVAAKVRKFNRNFGDKIKGSGK</sequence>
<protein>
    <recommendedName>
        <fullName evidence="1">Peptide methionine sulfoxide reductase MsrA 1</fullName>
        <shortName evidence="1">Protein-methionine-S-oxide reductase 1</shortName>
        <ecNumber evidence="1">1.8.4.11</ecNumber>
    </recommendedName>
    <alternativeName>
        <fullName evidence="1">Peptide-methionine (S)-S-oxide reductase 1</fullName>
        <shortName evidence="1">Peptide Met(O) reductase 1</shortName>
    </alternativeName>
</protein>
<organism>
    <name type="scientific">Rhodopirellula baltica (strain DSM 10527 / NCIMB 13988 / SH1)</name>
    <dbReference type="NCBI Taxonomy" id="243090"/>
    <lineage>
        <taxon>Bacteria</taxon>
        <taxon>Pseudomonadati</taxon>
        <taxon>Planctomycetota</taxon>
        <taxon>Planctomycetia</taxon>
        <taxon>Pirellulales</taxon>
        <taxon>Pirellulaceae</taxon>
        <taxon>Rhodopirellula</taxon>
    </lineage>
</organism>
<gene>
    <name evidence="1" type="primary">msrA1</name>
    <name type="ordered locus">RB11847</name>
</gene>
<feature type="chain" id="PRO_0000232664" description="Peptide methionine sulfoxide reductase MsrA 1">
    <location>
        <begin position="1"/>
        <end position="192"/>
    </location>
</feature>
<feature type="active site" evidence="1">
    <location>
        <position position="25"/>
    </location>
</feature>
<reference key="1">
    <citation type="journal article" date="2003" name="Proc. Natl. Acad. Sci. U.S.A.">
        <title>Complete genome sequence of the marine planctomycete Pirellula sp. strain 1.</title>
        <authorList>
            <person name="Gloeckner F.O."/>
            <person name="Kube M."/>
            <person name="Bauer M."/>
            <person name="Teeling H."/>
            <person name="Lombardot T."/>
            <person name="Ludwig W."/>
            <person name="Gade D."/>
            <person name="Beck A."/>
            <person name="Borzym K."/>
            <person name="Heitmann K."/>
            <person name="Rabus R."/>
            <person name="Schlesner H."/>
            <person name="Amann R."/>
            <person name="Reinhardt R."/>
        </authorList>
    </citation>
    <scope>NUCLEOTIDE SEQUENCE [LARGE SCALE GENOMIC DNA]</scope>
    <source>
        <strain>DSM 10527 / NCIMB 13988 / SH1</strain>
    </source>
</reference>
<comment type="function">
    <text evidence="1">Has an important function as a repair enzyme for proteins that have been inactivated by oxidation. Catalyzes the reversible oxidation-reduction of methionine sulfoxide in proteins to methionine.</text>
</comment>
<comment type="catalytic activity">
    <reaction evidence="1">
        <text>L-methionyl-[protein] + [thioredoxin]-disulfide + H2O = L-methionyl-(S)-S-oxide-[protein] + [thioredoxin]-dithiol</text>
        <dbReference type="Rhea" id="RHEA:14217"/>
        <dbReference type="Rhea" id="RHEA-COMP:10698"/>
        <dbReference type="Rhea" id="RHEA-COMP:10700"/>
        <dbReference type="Rhea" id="RHEA-COMP:12313"/>
        <dbReference type="Rhea" id="RHEA-COMP:12315"/>
        <dbReference type="ChEBI" id="CHEBI:15377"/>
        <dbReference type="ChEBI" id="CHEBI:16044"/>
        <dbReference type="ChEBI" id="CHEBI:29950"/>
        <dbReference type="ChEBI" id="CHEBI:44120"/>
        <dbReference type="ChEBI" id="CHEBI:50058"/>
        <dbReference type="EC" id="1.8.4.11"/>
    </reaction>
</comment>
<comment type="catalytic activity">
    <reaction evidence="1">
        <text>[thioredoxin]-disulfide + L-methionine + H2O = L-methionine (S)-S-oxide + [thioredoxin]-dithiol</text>
        <dbReference type="Rhea" id="RHEA:19993"/>
        <dbReference type="Rhea" id="RHEA-COMP:10698"/>
        <dbReference type="Rhea" id="RHEA-COMP:10700"/>
        <dbReference type="ChEBI" id="CHEBI:15377"/>
        <dbReference type="ChEBI" id="CHEBI:29950"/>
        <dbReference type="ChEBI" id="CHEBI:50058"/>
        <dbReference type="ChEBI" id="CHEBI:57844"/>
        <dbReference type="ChEBI" id="CHEBI:58772"/>
        <dbReference type="EC" id="1.8.4.11"/>
    </reaction>
</comment>
<comment type="similarity">
    <text evidence="1">Belongs to the MsrA Met sulfoxide reductase family.</text>
</comment>
<comment type="sequence caution" evidence="2">
    <conflict type="erroneous initiation">
        <sequence resource="EMBL-CDS" id="CAD77258"/>
    </conflict>
</comment>
<dbReference type="EC" id="1.8.4.11" evidence="1"/>
<dbReference type="EMBL" id="BX294154">
    <property type="protein sequence ID" value="CAD77258.1"/>
    <property type="status" value="ALT_INIT"/>
    <property type="molecule type" value="Genomic_DNA"/>
</dbReference>
<dbReference type="RefSeq" id="NP_870183.1">
    <property type="nucleotide sequence ID" value="NC_005027.1"/>
</dbReference>
<dbReference type="SMR" id="Q7UJK0"/>
<dbReference type="FunCoup" id="Q7UJK0">
    <property type="interactions" value="487"/>
</dbReference>
<dbReference type="STRING" id="243090.RB11847"/>
<dbReference type="EnsemblBacteria" id="CAD77258">
    <property type="protein sequence ID" value="CAD77258"/>
    <property type="gene ID" value="RB11847"/>
</dbReference>
<dbReference type="KEGG" id="rba:RB11847"/>
<dbReference type="PATRIC" id="fig|243090.15.peg.5713"/>
<dbReference type="eggNOG" id="COG0225">
    <property type="taxonomic scope" value="Bacteria"/>
</dbReference>
<dbReference type="HOGENOM" id="CLU_031040_10_0_0"/>
<dbReference type="InParanoid" id="Q7UJK0"/>
<dbReference type="OrthoDB" id="4174719at2"/>
<dbReference type="Proteomes" id="UP000001025">
    <property type="component" value="Chromosome"/>
</dbReference>
<dbReference type="GO" id="GO:0033744">
    <property type="term" value="F:L-methionine:thioredoxin-disulfide S-oxidoreductase activity"/>
    <property type="evidence" value="ECO:0007669"/>
    <property type="project" value="RHEA"/>
</dbReference>
<dbReference type="GO" id="GO:0008113">
    <property type="term" value="F:peptide-methionine (S)-S-oxide reductase activity"/>
    <property type="evidence" value="ECO:0007669"/>
    <property type="project" value="UniProtKB-UniRule"/>
</dbReference>
<dbReference type="GO" id="GO:0036211">
    <property type="term" value="P:protein modification process"/>
    <property type="evidence" value="ECO:0007669"/>
    <property type="project" value="UniProtKB-UniRule"/>
</dbReference>
<dbReference type="Gene3D" id="3.30.1060.10">
    <property type="entry name" value="Peptide methionine sulphoxide reductase MsrA"/>
    <property type="match status" value="1"/>
</dbReference>
<dbReference type="HAMAP" id="MF_01401">
    <property type="entry name" value="MsrA"/>
    <property type="match status" value="1"/>
</dbReference>
<dbReference type="InterPro" id="IPR002569">
    <property type="entry name" value="Met_Sox_Rdtase_MsrA_dom"/>
</dbReference>
<dbReference type="InterPro" id="IPR036509">
    <property type="entry name" value="Met_Sox_Rdtase_MsrA_sf"/>
</dbReference>
<dbReference type="NCBIfam" id="TIGR00401">
    <property type="entry name" value="msrA"/>
    <property type="match status" value="1"/>
</dbReference>
<dbReference type="PANTHER" id="PTHR43774">
    <property type="entry name" value="PEPTIDE METHIONINE SULFOXIDE REDUCTASE"/>
    <property type="match status" value="1"/>
</dbReference>
<dbReference type="PANTHER" id="PTHR43774:SF1">
    <property type="entry name" value="PEPTIDE METHIONINE SULFOXIDE REDUCTASE MSRA 2"/>
    <property type="match status" value="1"/>
</dbReference>
<dbReference type="Pfam" id="PF01625">
    <property type="entry name" value="PMSR"/>
    <property type="match status" value="1"/>
</dbReference>
<dbReference type="SUPFAM" id="SSF55068">
    <property type="entry name" value="Peptide methionine sulfoxide reductase"/>
    <property type="match status" value="1"/>
</dbReference>
<accession>Q7UJK0</accession>
<proteinExistence type="inferred from homology"/>
<name>MSRA1_RHOBA</name>
<evidence type="ECO:0000255" key="1">
    <source>
        <dbReference type="HAMAP-Rule" id="MF_01401"/>
    </source>
</evidence>
<evidence type="ECO:0000305" key="2"/>
<keyword id="KW-0560">Oxidoreductase</keyword>
<keyword id="KW-1185">Reference proteome</keyword>